<proteinExistence type="inferred from homology"/>
<feature type="chain" id="PRO_0000386372" description="GTPase Obg">
    <location>
        <begin position="1"/>
        <end position="435"/>
    </location>
</feature>
<feature type="domain" description="Obg" evidence="3">
    <location>
        <begin position="1"/>
        <end position="159"/>
    </location>
</feature>
<feature type="domain" description="OBG-type G" evidence="1">
    <location>
        <begin position="160"/>
        <end position="329"/>
    </location>
</feature>
<feature type="domain" description="OCT" evidence="2">
    <location>
        <begin position="357"/>
        <end position="435"/>
    </location>
</feature>
<feature type="binding site" evidence="1">
    <location>
        <begin position="166"/>
        <end position="173"/>
    </location>
    <ligand>
        <name>GTP</name>
        <dbReference type="ChEBI" id="CHEBI:37565"/>
    </ligand>
</feature>
<feature type="binding site" evidence="1">
    <location>
        <position position="173"/>
    </location>
    <ligand>
        <name>Mg(2+)</name>
        <dbReference type="ChEBI" id="CHEBI:18420"/>
    </ligand>
</feature>
<feature type="binding site" evidence="1">
    <location>
        <begin position="191"/>
        <end position="195"/>
    </location>
    <ligand>
        <name>GTP</name>
        <dbReference type="ChEBI" id="CHEBI:37565"/>
    </ligand>
</feature>
<feature type="binding site" evidence="1">
    <location>
        <position position="193"/>
    </location>
    <ligand>
        <name>Mg(2+)</name>
        <dbReference type="ChEBI" id="CHEBI:18420"/>
    </ligand>
</feature>
<feature type="binding site" evidence="1">
    <location>
        <begin position="212"/>
        <end position="215"/>
    </location>
    <ligand>
        <name>GTP</name>
        <dbReference type="ChEBI" id="CHEBI:37565"/>
    </ligand>
</feature>
<feature type="binding site" evidence="1">
    <location>
        <begin position="282"/>
        <end position="285"/>
    </location>
    <ligand>
        <name>GTP</name>
        <dbReference type="ChEBI" id="CHEBI:37565"/>
    </ligand>
</feature>
<feature type="binding site" evidence="1">
    <location>
        <begin position="310"/>
        <end position="312"/>
    </location>
    <ligand>
        <name>GTP</name>
        <dbReference type="ChEBI" id="CHEBI:37565"/>
    </ligand>
</feature>
<evidence type="ECO:0000255" key="1">
    <source>
        <dbReference type="HAMAP-Rule" id="MF_01454"/>
    </source>
</evidence>
<evidence type="ECO:0000255" key="2">
    <source>
        <dbReference type="PROSITE-ProRule" id="PRU01229"/>
    </source>
</evidence>
<evidence type="ECO:0000255" key="3">
    <source>
        <dbReference type="PROSITE-ProRule" id="PRU01231"/>
    </source>
</evidence>
<sequence length="435" mass="48696">MAFIDKCKIVLIAGNGGDGIVSWRRETHVPEGGPAGGNGGNGGSIWFVGNHNETSLEFLKYKKIIRAKHGEKGDIKNQHGANAEDVFINVPLGTVVYNPITNEILADINIDQQKYLVAQGGLGGHGNTHFKSPFNKAPNLYELGELGENVEVLLELKTIADIGIIGLPNAGKSTLISTFTNAKPKTANYMFTTLNPVLGTIYRDQNRIIFADIPGLIEGAHTGVGLGHDFLKHIERCFLLIHLISLDPNDNPDIINAYETIVNELKQYKQNLVNKPIVLVANKIDQIGALENLQILKEYLKNNQEIKIISALTNLHVDNMLDDVIKIYFAQKKIYEQRLKEQLPVDQILKWTSDIPKSKELDKTIEIIKVDDHIFEVFGEYLKYWAHRIPLKTQDNLIRFNQKLQSINFNQQLLQAGAVAGDSIKIYDITLEFEE</sequence>
<protein>
    <recommendedName>
        <fullName evidence="1">GTPase Obg</fullName>
        <ecNumber evidence="1">3.6.5.-</ecNumber>
    </recommendedName>
    <alternativeName>
        <fullName evidence="1">GTP-binding protein Obg</fullName>
    </alternativeName>
</protein>
<comment type="function">
    <text evidence="1">An essential GTPase which binds GTP, GDP and possibly (p)ppGpp with moderate affinity, with high nucleotide exchange rates and a fairly low GTP hydrolysis rate. Plays a role in control of the cell cycle, stress response, ribosome biogenesis and in those bacteria that undergo differentiation, in morphogenesis control.</text>
</comment>
<comment type="cofactor">
    <cofactor evidence="1">
        <name>Mg(2+)</name>
        <dbReference type="ChEBI" id="CHEBI:18420"/>
    </cofactor>
</comment>
<comment type="subunit">
    <text evidence="1">Monomer.</text>
</comment>
<comment type="subcellular location">
    <subcellularLocation>
        <location evidence="1">Cytoplasm</location>
    </subcellularLocation>
</comment>
<comment type="similarity">
    <text evidence="1">Belongs to the TRAFAC class OBG-HflX-like GTPase superfamily. OBG GTPase family.</text>
</comment>
<keyword id="KW-0963">Cytoplasm</keyword>
<keyword id="KW-0342">GTP-binding</keyword>
<keyword id="KW-0378">Hydrolase</keyword>
<keyword id="KW-0460">Magnesium</keyword>
<keyword id="KW-0479">Metal-binding</keyword>
<keyword id="KW-0547">Nucleotide-binding</keyword>
<keyword id="KW-1185">Reference proteome</keyword>
<organism>
    <name type="scientific">Ureaplasma parvum serovar 3 (strain ATCC 700970)</name>
    <dbReference type="NCBI Taxonomy" id="273119"/>
    <lineage>
        <taxon>Bacteria</taxon>
        <taxon>Bacillati</taxon>
        <taxon>Mycoplasmatota</taxon>
        <taxon>Mycoplasmoidales</taxon>
        <taxon>Mycoplasmoidaceae</taxon>
        <taxon>Ureaplasma</taxon>
    </lineage>
</organism>
<accession>Q9PQ29</accession>
<name>OBG_UREPA</name>
<reference key="1">
    <citation type="journal article" date="2000" name="Nature">
        <title>The complete sequence of the mucosal pathogen Ureaplasma urealyticum.</title>
        <authorList>
            <person name="Glass J.I."/>
            <person name="Lefkowitz E.J."/>
            <person name="Glass J.S."/>
            <person name="Heiner C.R."/>
            <person name="Chen E.Y."/>
            <person name="Cassell G.H."/>
        </authorList>
    </citation>
    <scope>NUCLEOTIDE SEQUENCE [LARGE SCALE GENOMIC DNA]</scope>
    <source>
        <strain>ATCC 700970</strain>
    </source>
</reference>
<dbReference type="EC" id="3.6.5.-" evidence="1"/>
<dbReference type="EMBL" id="AF222894">
    <property type="protein sequence ID" value="AAF30873.1"/>
    <property type="molecule type" value="Genomic_DNA"/>
</dbReference>
<dbReference type="RefSeq" id="WP_006688605.1">
    <property type="nucleotide sequence ID" value="NC_002162.1"/>
</dbReference>
<dbReference type="SMR" id="Q9PQ29"/>
<dbReference type="STRING" id="273119.UU461"/>
<dbReference type="EnsemblBacteria" id="AAF30873">
    <property type="protein sequence ID" value="AAF30873"/>
    <property type="gene ID" value="UU461"/>
</dbReference>
<dbReference type="GeneID" id="29672770"/>
<dbReference type="KEGG" id="uur:UU461"/>
<dbReference type="eggNOG" id="COG0536">
    <property type="taxonomic scope" value="Bacteria"/>
</dbReference>
<dbReference type="HOGENOM" id="CLU_011747_2_1_14"/>
<dbReference type="OrthoDB" id="9807318at2"/>
<dbReference type="Proteomes" id="UP000000423">
    <property type="component" value="Chromosome"/>
</dbReference>
<dbReference type="GO" id="GO:0005737">
    <property type="term" value="C:cytoplasm"/>
    <property type="evidence" value="ECO:0007669"/>
    <property type="project" value="UniProtKB-SubCell"/>
</dbReference>
<dbReference type="GO" id="GO:0005525">
    <property type="term" value="F:GTP binding"/>
    <property type="evidence" value="ECO:0007669"/>
    <property type="project" value="UniProtKB-UniRule"/>
</dbReference>
<dbReference type="GO" id="GO:0003924">
    <property type="term" value="F:GTPase activity"/>
    <property type="evidence" value="ECO:0007669"/>
    <property type="project" value="UniProtKB-UniRule"/>
</dbReference>
<dbReference type="GO" id="GO:0000287">
    <property type="term" value="F:magnesium ion binding"/>
    <property type="evidence" value="ECO:0007669"/>
    <property type="project" value="InterPro"/>
</dbReference>
<dbReference type="GO" id="GO:0042254">
    <property type="term" value="P:ribosome biogenesis"/>
    <property type="evidence" value="ECO:0007669"/>
    <property type="project" value="UniProtKB-UniRule"/>
</dbReference>
<dbReference type="CDD" id="cd01898">
    <property type="entry name" value="Obg"/>
    <property type="match status" value="1"/>
</dbReference>
<dbReference type="FunFam" id="2.70.210.12:FF:000001">
    <property type="entry name" value="GTPase Obg"/>
    <property type="match status" value="1"/>
</dbReference>
<dbReference type="Gene3D" id="3.30.300.350">
    <property type="entry name" value="GTP-binding protein OBG, C-terminal domain"/>
    <property type="match status" value="1"/>
</dbReference>
<dbReference type="Gene3D" id="2.70.210.12">
    <property type="entry name" value="GTP1/OBG domain"/>
    <property type="match status" value="1"/>
</dbReference>
<dbReference type="Gene3D" id="3.40.50.300">
    <property type="entry name" value="P-loop containing nucleotide triphosphate hydrolases"/>
    <property type="match status" value="1"/>
</dbReference>
<dbReference type="HAMAP" id="MF_01454">
    <property type="entry name" value="GTPase_Obg"/>
    <property type="match status" value="1"/>
</dbReference>
<dbReference type="InterPro" id="IPR031167">
    <property type="entry name" value="G_OBG"/>
</dbReference>
<dbReference type="InterPro" id="IPR006073">
    <property type="entry name" value="GTP-bd"/>
</dbReference>
<dbReference type="InterPro" id="IPR014100">
    <property type="entry name" value="GTP-bd_Obg/CgtA"/>
</dbReference>
<dbReference type="InterPro" id="IPR036346">
    <property type="entry name" value="GTP-bd_prot_GTP1/OBG_C_sf"/>
</dbReference>
<dbReference type="InterPro" id="IPR006074">
    <property type="entry name" value="GTP1-OBG_CS"/>
</dbReference>
<dbReference type="InterPro" id="IPR006169">
    <property type="entry name" value="GTP1_OBG_dom"/>
</dbReference>
<dbReference type="InterPro" id="IPR036726">
    <property type="entry name" value="GTP1_OBG_dom_sf"/>
</dbReference>
<dbReference type="InterPro" id="IPR045086">
    <property type="entry name" value="OBG_GTPase"/>
</dbReference>
<dbReference type="InterPro" id="IPR015349">
    <property type="entry name" value="OCT_dom"/>
</dbReference>
<dbReference type="InterPro" id="IPR027417">
    <property type="entry name" value="P-loop_NTPase"/>
</dbReference>
<dbReference type="InterPro" id="IPR005225">
    <property type="entry name" value="Small_GTP-bd"/>
</dbReference>
<dbReference type="NCBIfam" id="TIGR02729">
    <property type="entry name" value="Obg_CgtA"/>
    <property type="match status" value="1"/>
</dbReference>
<dbReference type="NCBIfam" id="TIGR03595">
    <property type="entry name" value="Obg_CgtA_exten"/>
    <property type="match status" value="1"/>
</dbReference>
<dbReference type="NCBIfam" id="NF008955">
    <property type="entry name" value="PRK12297.1"/>
    <property type="match status" value="1"/>
</dbReference>
<dbReference type="NCBIfam" id="NF008956">
    <property type="entry name" value="PRK12299.1"/>
    <property type="match status" value="1"/>
</dbReference>
<dbReference type="NCBIfam" id="TIGR00231">
    <property type="entry name" value="small_GTP"/>
    <property type="match status" value="1"/>
</dbReference>
<dbReference type="PANTHER" id="PTHR11702">
    <property type="entry name" value="DEVELOPMENTALLY REGULATED GTP-BINDING PROTEIN-RELATED"/>
    <property type="match status" value="1"/>
</dbReference>
<dbReference type="PANTHER" id="PTHR11702:SF31">
    <property type="entry name" value="MITOCHONDRIAL RIBOSOME-ASSOCIATED GTPASE 2"/>
    <property type="match status" value="1"/>
</dbReference>
<dbReference type="Pfam" id="PF09269">
    <property type="entry name" value="DUF1967"/>
    <property type="match status" value="1"/>
</dbReference>
<dbReference type="Pfam" id="PF01018">
    <property type="entry name" value="GTP1_OBG"/>
    <property type="match status" value="1"/>
</dbReference>
<dbReference type="Pfam" id="PF01926">
    <property type="entry name" value="MMR_HSR1"/>
    <property type="match status" value="1"/>
</dbReference>
<dbReference type="PIRSF" id="PIRSF002401">
    <property type="entry name" value="GTP_bd_Obg/CgtA"/>
    <property type="match status" value="1"/>
</dbReference>
<dbReference type="PRINTS" id="PR00326">
    <property type="entry name" value="GTP1OBG"/>
</dbReference>
<dbReference type="SUPFAM" id="SSF102741">
    <property type="entry name" value="Obg GTP-binding protein C-terminal domain"/>
    <property type="match status" value="1"/>
</dbReference>
<dbReference type="SUPFAM" id="SSF82051">
    <property type="entry name" value="Obg GTP-binding protein N-terminal domain"/>
    <property type="match status" value="1"/>
</dbReference>
<dbReference type="SUPFAM" id="SSF52540">
    <property type="entry name" value="P-loop containing nucleoside triphosphate hydrolases"/>
    <property type="match status" value="1"/>
</dbReference>
<dbReference type="PROSITE" id="PS51710">
    <property type="entry name" value="G_OBG"/>
    <property type="match status" value="1"/>
</dbReference>
<dbReference type="PROSITE" id="PS00905">
    <property type="entry name" value="GTP1_OBG"/>
    <property type="match status" value="1"/>
</dbReference>
<dbReference type="PROSITE" id="PS51883">
    <property type="entry name" value="OBG"/>
    <property type="match status" value="1"/>
</dbReference>
<dbReference type="PROSITE" id="PS51881">
    <property type="entry name" value="OCT"/>
    <property type="match status" value="1"/>
</dbReference>
<gene>
    <name evidence="1" type="primary">obg</name>
    <name type="ordered locus">UU461</name>
</gene>